<protein>
    <recommendedName>
        <fullName>Uncharacterized protein ECU05_0510</fullName>
    </recommendedName>
</protein>
<accession>Q8SVL5</accession>
<comment type="developmental stage">
    <text evidence="1">Expressed in late sporogonial stages.</text>
</comment>
<name>Y551_ENCCU</name>
<dbReference type="EMBL" id="AL590445">
    <property type="protein sequence ID" value="CAD26570.1"/>
    <property type="molecule type" value="Genomic_DNA"/>
</dbReference>
<dbReference type="RefSeq" id="NP_597393.1">
    <property type="nucleotide sequence ID" value="NM_001041259.1"/>
</dbReference>
<dbReference type="GeneID" id="859057"/>
<dbReference type="KEGG" id="ecu:ECU05_0510"/>
<dbReference type="VEuPathDB" id="MicrosporidiaDB:ECU05_0510"/>
<dbReference type="HOGENOM" id="CLU_1200153_0_0_1"/>
<dbReference type="InParanoid" id="Q8SVL5"/>
<dbReference type="OMA" id="IVPELIC"/>
<dbReference type="OrthoDB" id="2189721at2759"/>
<dbReference type="Proteomes" id="UP000000819">
    <property type="component" value="Chromosome V"/>
</dbReference>
<dbReference type="GO" id="GO:0046982">
    <property type="term" value="F:protein heterodimerization activity"/>
    <property type="evidence" value="ECO:0007669"/>
    <property type="project" value="InterPro"/>
</dbReference>
<dbReference type="CDD" id="cd00076">
    <property type="entry name" value="HFD_SF"/>
    <property type="match status" value="1"/>
</dbReference>
<dbReference type="Gene3D" id="1.10.20.10">
    <property type="entry name" value="Histone, subunit A"/>
    <property type="match status" value="1"/>
</dbReference>
<dbReference type="InterPro" id="IPR031498">
    <property type="entry name" value="Bromo_TP-like"/>
</dbReference>
<dbReference type="InterPro" id="IPR009072">
    <property type="entry name" value="Histone-fold"/>
</dbReference>
<dbReference type="Pfam" id="PF17027">
    <property type="entry name" value="Bromo_TP_like"/>
    <property type="match status" value="1"/>
</dbReference>
<organism>
    <name type="scientific">Encephalitozoon cuniculi (strain GB-M1)</name>
    <name type="common">Microsporidian parasite</name>
    <dbReference type="NCBI Taxonomy" id="284813"/>
    <lineage>
        <taxon>Eukaryota</taxon>
        <taxon>Fungi</taxon>
        <taxon>Fungi incertae sedis</taxon>
        <taxon>Microsporidia</taxon>
        <taxon>Unikaryonidae</taxon>
        <taxon>Encephalitozoon</taxon>
    </lineage>
</organism>
<sequence>MKSNMNTKILRLAVVEILSQSGFDKTADQALNVLTDILRYYIEHLGCRMRRKGENGIVPELICRFLVDEEYGECEYQIPELLSFLRYQVTVKNYLNDRYSVGSEESILHILRVLPKNAQLRMVMRNGGNLNDMNEVEKEVVEEDVRLDEFTKEFVESSLQKAGKREVREYRLESVDLIDGEPARRVKIGDGEFNAILDQKQNGIDFLEEPGVLARDFAIWNNRHVFKGYE</sequence>
<keyword id="KW-1185">Reference proteome</keyword>
<reference key="1">
    <citation type="journal article" date="2001" name="Nature">
        <title>Genome sequence and gene compaction of the eukaryote parasite Encephalitozoon cuniculi.</title>
        <authorList>
            <person name="Katinka M.D."/>
            <person name="Duprat S."/>
            <person name="Cornillot E."/>
            <person name="Metenier G."/>
            <person name="Thomarat F."/>
            <person name="Prensier G."/>
            <person name="Barbe V."/>
            <person name="Peyretaillade E."/>
            <person name="Brottier P."/>
            <person name="Wincker P."/>
            <person name="Delbac F."/>
            <person name="El Alaoui H."/>
            <person name="Peyret P."/>
            <person name="Saurin W."/>
            <person name="Gouy M."/>
            <person name="Weissenbach J."/>
            <person name="Vivares C.P."/>
        </authorList>
    </citation>
    <scope>NUCLEOTIDE SEQUENCE [LARGE SCALE GENOMIC DNA]</scope>
    <source>
        <strain>GB-M1</strain>
    </source>
</reference>
<reference key="2">
    <citation type="journal article" date="2006" name="Proteomics">
        <title>Proteomic analysis of the eukaryotic parasite Encephalitozoon cuniculi (microsporidia): a reference map for proteins expressed in late sporogonial stages.</title>
        <authorList>
            <person name="Brosson D."/>
            <person name="Kuhn L."/>
            <person name="Delbac F."/>
            <person name="Garin J."/>
            <person name="Vivares C.P."/>
            <person name="Texier C."/>
        </authorList>
    </citation>
    <scope>IDENTIFICATION BY MASS SPECTROMETRY [LARGE SCALE ANALYSIS]</scope>
    <scope>DEVELOPMENTAL STAGE</scope>
</reference>
<gene>
    <name type="ordered locus">ECU05_0510</name>
</gene>
<proteinExistence type="evidence at protein level"/>
<evidence type="ECO:0000269" key="1">
    <source>
    </source>
</evidence>
<feature type="chain" id="PRO_0000382771" description="Uncharacterized protein ECU05_0510">
    <location>
        <begin position="1"/>
        <end position="230"/>
    </location>
</feature>